<sequence>MAALDSDSDEDLISYGTGLEPLDEGERPKKPIPLQDQTVRDEKGRYKRFHGAFSGGFSAGYFNTVGSKEGWTPSTFVSSRQNRADKSALGPEDFMDEEDLSEFGIAPKAIVTTDDFASKTKDRIREKARQLAAAAAPIPGATLLDDLITPAKLSVGFELLRKMGWKEGQGVGPRVKRKARRQKPDPGVKIYGCALPPGGSEESEDEDDDYLPDNVTFAPKDVMPVDFTPKDNVHGLAYKGLDPHQALFGMPGEHLNLFGGASEGTSHLLGDVGLSKGRKLGISGQAFGVGALEEEDDDIYATETLSKYDTVLKDEEPGDGLYGWTAPKQYKNQKEPERDLRYVGKILEGFSLASKPLSSKKIYPPPQLPRDYRPVHYFRPVVAATAENAHVLQVLSESSGKAGQDVGTHSRHQLNASKRGELLGEMPIQGSATSVLEFLSQKDKERIKEVKQATDLKAAQAKARSLAQSASSSRAQASTPDLGHSSWHLALGGGTVTTRANNFKPFAKDPEKQRRYEEFLVHMKKGQKDALERCLDPSMTEWERSREREEFARAAQLYVSSNSTLSSRFTHAKEEEDSDQVEVPRDQENDVSDKQSAVKMKMFGKLTRDTFEWHPDKLLCKRFNVPDPYPGSTLVGLPRVKRDKYSVFNFLTLPEPAPLPTAPVPSEKAPQQRGSDKSRKPSRWDTSKQEKKEDSISEFLSQARSKVGPPKQESSALGSKEEQAPEPRPDTTVDKAVDAQTDGEGSRPSMDLFKAIFASSSDEKSSSSEEEQDDSEDSQEHTEEASLKGSQEAAAGETSVVLAAEPEPCEPATPFPIQKAQIDEREEFGPRLPPVFCPNSRQKLEIPQKEKPKKSKERHKSKKEHRRKREKKKKHKKHKHKSKQKNKKSEKNSSSESTDSSDSGSDDGGPAELSPQELLRRLKCLPLRRQ</sequence>
<dbReference type="EMBL" id="AK004868">
    <property type="protein sequence ID" value="BAB23629.1"/>
    <property type="molecule type" value="mRNA"/>
</dbReference>
<dbReference type="EMBL" id="BC026394">
    <property type="protein sequence ID" value="AAH26394.1"/>
    <property type="molecule type" value="mRNA"/>
</dbReference>
<dbReference type="EMBL" id="BC132155">
    <property type="protein sequence ID" value="AAI32156.1"/>
    <property type="molecule type" value="mRNA"/>
</dbReference>
<dbReference type="EMBL" id="BC125584">
    <property type="protein sequence ID" value="AAI25585.1"/>
    <property type="molecule type" value="mRNA"/>
</dbReference>
<dbReference type="CCDS" id="CCDS21147.1"/>
<dbReference type="RefSeq" id="NP_080457.1">
    <property type="nucleotide sequence ID" value="NM_026181.1"/>
</dbReference>
<dbReference type="BioGRID" id="212213">
    <property type="interactions" value="9"/>
</dbReference>
<dbReference type="FunCoup" id="Q9DBM1">
    <property type="interactions" value="1998"/>
</dbReference>
<dbReference type="STRING" id="10090.ENSMUSP00000078632"/>
<dbReference type="iPTMnet" id="Q9DBM1"/>
<dbReference type="PhosphoSitePlus" id="Q9DBM1"/>
<dbReference type="PaxDb" id="10090-ENSMUSP00000078632"/>
<dbReference type="ProteomicsDB" id="271010"/>
<dbReference type="Pumba" id="Q9DBM1"/>
<dbReference type="Antibodypedia" id="28992">
    <property type="antibodies" value="19 antibodies from 7 providers"/>
</dbReference>
<dbReference type="DNASU" id="67471"/>
<dbReference type="Ensembl" id="ENSMUST00000079693.12">
    <property type="protein sequence ID" value="ENSMUSP00000078632.6"/>
    <property type="gene ID" value="ENSMUSG00000063808.15"/>
</dbReference>
<dbReference type="GeneID" id="67471"/>
<dbReference type="KEGG" id="mmu:67471"/>
<dbReference type="UCSC" id="uc009gjq.1">
    <property type="organism name" value="mouse"/>
</dbReference>
<dbReference type="AGR" id="MGI:1914721"/>
<dbReference type="CTD" id="55094"/>
<dbReference type="MGI" id="MGI:1914721">
    <property type="gene designation" value="Gpatch1"/>
</dbReference>
<dbReference type="VEuPathDB" id="HostDB:ENSMUSG00000063808"/>
<dbReference type="eggNOG" id="KOG2138">
    <property type="taxonomic scope" value="Eukaryota"/>
</dbReference>
<dbReference type="GeneTree" id="ENSGT00390000007074"/>
<dbReference type="InParanoid" id="Q9DBM1"/>
<dbReference type="OMA" id="QLWQQHA"/>
<dbReference type="OrthoDB" id="20507at2759"/>
<dbReference type="PhylomeDB" id="Q9DBM1"/>
<dbReference type="TreeFam" id="TF314717"/>
<dbReference type="Reactome" id="R-MMU-72163">
    <property type="pathway name" value="mRNA Splicing - Major Pathway"/>
</dbReference>
<dbReference type="BioGRID-ORCS" id="67471">
    <property type="hits" value="13 hits in 77 CRISPR screens"/>
</dbReference>
<dbReference type="PRO" id="PR:Q9DBM1"/>
<dbReference type="Proteomes" id="UP000000589">
    <property type="component" value="Chromosome 7"/>
</dbReference>
<dbReference type="RNAct" id="Q9DBM1">
    <property type="molecule type" value="protein"/>
</dbReference>
<dbReference type="Bgee" id="ENSMUSG00000063808">
    <property type="expression patterns" value="Expressed in dorsal pancreas and 248 other cell types or tissues"/>
</dbReference>
<dbReference type="ExpressionAtlas" id="Q9DBM1">
    <property type="expression patterns" value="baseline and differential"/>
</dbReference>
<dbReference type="GO" id="GO:0071013">
    <property type="term" value="C:catalytic step 2 spliceosome"/>
    <property type="evidence" value="ECO:0007669"/>
    <property type="project" value="Ensembl"/>
</dbReference>
<dbReference type="GO" id="GO:0003676">
    <property type="term" value="F:nucleic acid binding"/>
    <property type="evidence" value="ECO:0007669"/>
    <property type="project" value="InterPro"/>
</dbReference>
<dbReference type="GO" id="GO:0006397">
    <property type="term" value="P:mRNA processing"/>
    <property type="evidence" value="ECO:0007669"/>
    <property type="project" value="InterPro"/>
</dbReference>
<dbReference type="InterPro" id="IPR011666">
    <property type="entry name" value="DUF1604"/>
</dbReference>
<dbReference type="InterPro" id="IPR000467">
    <property type="entry name" value="G_patch_dom"/>
</dbReference>
<dbReference type="PANTHER" id="PTHR13384">
    <property type="entry name" value="G PATCH DOMAIN-CONTAINING PROTEIN 1"/>
    <property type="match status" value="1"/>
</dbReference>
<dbReference type="PANTHER" id="PTHR13384:SF19">
    <property type="entry name" value="G PATCH DOMAIN-CONTAINING PROTEIN 1"/>
    <property type="match status" value="1"/>
</dbReference>
<dbReference type="Pfam" id="PF07713">
    <property type="entry name" value="DUF1604"/>
    <property type="match status" value="1"/>
</dbReference>
<dbReference type="Pfam" id="PF01585">
    <property type="entry name" value="G-patch"/>
    <property type="match status" value="1"/>
</dbReference>
<dbReference type="PROSITE" id="PS50174">
    <property type="entry name" value="G_PATCH"/>
    <property type="match status" value="1"/>
</dbReference>
<protein>
    <recommendedName>
        <fullName>G patch domain-containing protein 1</fullName>
    </recommendedName>
</protein>
<keyword id="KW-0007">Acetylation</keyword>
<keyword id="KW-1017">Isopeptide bond</keyword>
<keyword id="KW-0597">Phosphoprotein</keyword>
<keyword id="KW-1185">Reference proteome</keyword>
<keyword id="KW-0832">Ubl conjugation</keyword>
<accession>Q9DBM1</accession>
<accession>Q8R0V4</accession>
<comment type="similarity">
    <text evidence="4">Belongs to the GPATCH1 family.</text>
</comment>
<evidence type="ECO:0000250" key="1">
    <source>
        <dbReference type="UniProtKB" id="Q9BRR8"/>
    </source>
</evidence>
<evidence type="ECO:0000255" key="2">
    <source>
        <dbReference type="PROSITE-ProRule" id="PRU00092"/>
    </source>
</evidence>
<evidence type="ECO:0000256" key="3">
    <source>
        <dbReference type="SAM" id="MobiDB-lite"/>
    </source>
</evidence>
<evidence type="ECO:0000305" key="4"/>
<gene>
    <name type="primary">Gpatch1</name>
    <name type="synonym">Gpatc1</name>
</gene>
<reference key="1">
    <citation type="journal article" date="2005" name="Science">
        <title>The transcriptional landscape of the mammalian genome.</title>
        <authorList>
            <person name="Carninci P."/>
            <person name="Kasukawa T."/>
            <person name="Katayama S."/>
            <person name="Gough J."/>
            <person name="Frith M.C."/>
            <person name="Maeda N."/>
            <person name="Oyama R."/>
            <person name="Ravasi T."/>
            <person name="Lenhard B."/>
            <person name="Wells C."/>
            <person name="Kodzius R."/>
            <person name="Shimokawa K."/>
            <person name="Bajic V.B."/>
            <person name="Brenner S.E."/>
            <person name="Batalov S."/>
            <person name="Forrest A.R."/>
            <person name="Zavolan M."/>
            <person name="Davis M.J."/>
            <person name="Wilming L.G."/>
            <person name="Aidinis V."/>
            <person name="Allen J.E."/>
            <person name="Ambesi-Impiombato A."/>
            <person name="Apweiler R."/>
            <person name="Aturaliya R.N."/>
            <person name="Bailey T.L."/>
            <person name="Bansal M."/>
            <person name="Baxter L."/>
            <person name="Beisel K.W."/>
            <person name="Bersano T."/>
            <person name="Bono H."/>
            <person name="Chalk A.M."/>
            <person name="Chiu K.P."/>
            <person name="Choudhary V."/>
            <person name="Christoffels A."/>
            <person name="Clutterbuck D.R."/>
            <person name="Crowe M.L."/>
            <person name="Dalla E."/>
            <person name="Dalrymple B.P."/>
            <person name="de Bono B."/>
            <person name="Della Gatta G."/>
            <person name="di Bernardo D."/>
            <person name="Down T."/>
            <person name="Engstrom P."/>
            <person name="Fagiolini M."/>
            <person name="Faulkner G."/>
            <person name="Fletcher C.F."/>
            <person name="Fukushima T."/>
            <person name="Furuno M."/>
            <person name="Futaki S."/>
            <person name="Gariboldi M."/>
            <person name="Georgii-Hemming P."/>
            <person name="Gingeras T.R."/>
            <person name="Gojobori T."/>
            <person name="Green R.E."/>
            <person name="Gustincich S."/>
            <person name="Harbers M."/>
            <person name="Hayashi Y."/>
            <person name="Hensch T.K."/>
            <person name="Hirokawa N."/>
            <person name="Hill D."/>
            <person name="Huminiecki L."/>
            <person name="Iacono M."/>
            <person name="Ikeo K."/>
            <person name="Iwama A."/>
            <person name="Ishikawa T."/>
            <person name="Jakt M."/>
            <person name="Kanapin A."/>
            <person name="Katoh M."/>
            <person name="Kawasawa Y."/>
            <person name="Kelso J."/>
            <person name="Kitamura H."/>
            <person name="Kitano H."/>
            <person name="Kollias G."/>
            <person name="Krishnan S.P."/>
            <person name="Kruger A."/>
            <person name="Kummerfeld S.K."/>
            <person name="Kurochkin I.V."/>
            <person name="Lareau L.F."/>
            <person name="Lazarevic D."/>
            <person name="Lipovich L."/>
            <person name="Liu J."/>
            <person name="Liuni S."/>
            <person name="McWilliam S."/>
            <person name="Madan Babu M."/>
            <person name="Madera M."/>
            <person name="Marchionni L."/>
            <person name="Matsuda H."/>
            <person name="Matsuzawa S."/>
            <person name="Miki H."/>
            <person name="Mignone F."/>
            <person name="Miyake S."/>
            <person name="Morris K."/>
            <person name="Mottagui-Tabar S."/>
            <person name="Mulder N."/>
            <person name="Nakano N."/>
            <person name="Nakauchi H."/>
            <person name="Ng P."/>
            <person name="Nilsson R."/>
            <person name="Nishiguchi S."/>
            <person name="Nishikawa S."/>
            <person name="Nori F."/>
            <person name="Ohara O."/>
            <person name="Okazaki Y."/>
            <person name="Orlando V."/>
            <person name="Pang K.C."/>
            <person name="Pavan W.J."/>
            <person name="Pavesi G."/>
            <person name="Pesole G."/>
            <person name="Petrovsky N."/>
            <person name="Piazza S."/>
            <person name="Reed J."/>
            <person name="Reid J.F."/>
            <person name="Ring B.Z."/>
            <person name="Ringwald M."/>
            <person name="Rost B."/>
            <person name="Ruan Y."/>
            <person name="Salzberg S.L."/>
            <person name="Sandelin A."/>
            <person name="Schneider C."/>
            <person name="Schoenbach C."/>
            <person name="Sekiguchi K."/>
            <person name="Semple C.A."/>
            <person name="Seno S."/>
            <person name="Sessa L."/>
            <person name="Sheng Y."/>
            <person name="Shibata Y."/>
            <person name="Shimada H."/>
            <person name="Shimada K."/>
            <person name="Silva D."/>
            <person name="Sinclair B."/>
            <person name="Sperling S."/>
            <person name="Stupka E."/>
            <person name="Sugiura K."/>
            <person name="Sultana R."/>
            <person name="Takenaka Y."/>
            <person name="Taki K."/>
            <person name="Tammoja K."/>
            <person name="Tan S.L."/>
            <person name="Tang S."/>
            <person name="Taylor M.S."/>
            <person name="Tegner J."/>
            <person name="Teichmann S.A."/>
            <person name="Ueda H.R."/>
            <person name="van Nimwegen E."/>
            <person name="Verardo R."/>
            <person name="Wei C.L."/>
            <person name="Yagi K."/>
            <person name="Yamanishi H."/>
            <person name="Zabarovsky E."/>
            <person name="Zhu S."/>
            <person name="Zimmer A."/>
            <person name="Hide W."/>
            <person name="Bult C."/>
            <person name="Grimmond S.M."/>
            <person name="Teasdale R.D."/>
            <person name="Liu E.T."/>
            <person name="Brusic V."/>
            <person name="Quackenbush J."/>
            <person name="Wahlestedt C."/>
            <person name="Mattick J.S."/>
            <person name="Hume D.A."/>
            <person name="Kai C."/>
            <person name="Sasaki D."/>
            <person name="Tomaru Y."/>
            <person name="Fukuda S."/>
            <person name="Kanamori-Katayama M."/>
            <person name="Suzuki M."/>
            <person name="Aoki J."/>
            <person name="Arakawa T."/>
            <person name="Iida J."/>
            <person name="Imamura K."/>
            <person name="Itoh M."/>
            <person name="Kato T."/>
            <person name="Kawaji H."/>
            <person name="Kawagashira N."/>
            <person name="Kawashima T."/>
            <person name="Kojima M."/>
            <person name="Kondo S."/>
            <person name="Konno H."/>
            <person name="Nakano K."/>
            <person name="Ninomiya N."/>
            <person name="Nishio T."/>
            <person name="Okada M."/>
            <person name="Plessy C."/>
            <person name="Shibata K."/>
            <person name="Shiraki T."/>
            <person name="Suzuki S."/>
            <person name="Tagami M."/>
            <person name="Waki K."/>
            <person name="Watahiki A."/>
            <person name="Okamura-Oho Y."/>
            <person name="Suzuki H."/>
            <person name="Kawai J."/>
            <person name="Hayashizaki Y."/>
        </authorList>
    </citation>
    <scope>NUCLEOTIDE SEQUENCE [LARGE SCALE MRNA]</scope>
    <source>
        <strain>C57BL/6J</strain>
        <tissue>Liver</tissue>
    </source>
</reference>
<reference key="2">
    <citation type="journal article" date="2004" name="Genome Res.">
        <title>The status, quality, and expansion of the NIH full-length cDNA project: the Mammalian Gene Collection (MGC).</title>
        <authorList>
            <consortium name="The MGC Project Team"/>
        </authorList>
    </citation>
    <scope>NUCLEOTIDE SEQUENCE [LARGE SCALE MRNA]</scope>
    <source>
        <strain>FVB/N</strain>
        <tissue>Brain</tissue>
        <tissue>Liver</tissue>
    </source>
</reference>
<feature type="initiator methionine" description="Removed" evidence="1">
    <location>
        <position position="1"/>
    </location>
</feature>
<feature type="chain" id="PRO_0000287458" description="G patch domain-containing protein 1">
    <location>
        <begin position="2"/>
        <end position="930"/>
    </location>
</feature>
<feature type="domain" description="G-patch" evidence="2">
    <location>
        <begin position="152"/>
        <end position="198"/>
    </location>
</feature>
<feature type="region of interest" description="Disordered" evidence="3">
    <location>
        <begin position="1"/>
        <end position="41"/>
    </location>
</feature>
<feature type="region of interest" description="Disordered" evidence="3">
    <location>
        <begin position="170"/>
        <end position="209"/>
    </location>
</feature>
<feature type="region of interest" description="Disordered" evidence="3">
    <location>
        <begin position="400"/>
        <end position="420"/>
    </location>
</feature>
<feature type="region of interest" description="Disordered" evidence="3">
    <location>
        <begin position="465"/>
        <end position="486"/>
    </location>
</feature>
<feature type="region of interest" description="Disordered" evidence="3">
    <location>
        <begin position="566"/>
        <end position="596"/>
    </location>
</feature>
<feature type="region of interest" description="Disordered" evidence="3">
    <location>
        <begin position="654"/>
        <end position="930"/>
    </location>
</feature>
<feature type="compositionally biased region" description="Acidic residues" evidence="3">
    <location>
        <begin position="1"/>
        <end position="12"/>
    </location>
</feature>
<feature type="compositionally biased region" description="Low complexity" evidence="3">
    <location>
        <begin position="465"/>
        <end position="478"/>
    </location>
</feature>
<feature type="compositionally biased region" description="Basic and acidic residues" evidence="3">
    <location>
        <begin position="582"/>
        <end position="593"/>
    </location>
</feature>
<feature type="compositionally biased region" description="Basic and acidic residues" evidence="3">
    <location>
        <begin position="674"/>
        <end position="695"/>
    </location>
</feature>
<feature type="compositionally biased region" description="Basic and acidic residues" evidence="3">
    <location>
        <begin position="719"/>
        <end position="737"/>
    </location>
</feature>
<feature type="compositionally biased region" description="Acidic residues" evidence="3">
    <location>
        <begin position="768"/>
        <end position="777"/>
    </location>
</feature>
<feature type="compositionally biased region" description="Basic residues" evidence="3">
    <location>
        <begin position="851"/>
        <end position="886"/>
    </location>
</feature>
<feature type="compositionally biased region" description="Low complexity" evidence="3">
    <location>
        <begin position="894"/>
        <end position="903"/>
    </location>
</feature>
<feature type="compositionally biased region" description="Basic residues" evidence="3">
    <location>
        <begin position="921"/>
        <end position="930"/>
    </location>
</feature>
<feature type="modified residue" description="N-acetylalanine" evidence="1">
    <location>
        <position position="2"/>
    </location>
</feature>
<feature type="modified residue" description="Phosphoserine" evidence="1">
    <location>
        <position position="6"/>
    </location>
</feature>
<feature type="modified residue" description="Phosphoserine" evidence="1">
    <location>
        <position position="8"/>
    </location>
</feature>
<feature type="modified residue" description="Phosphoserine" evidence="1">
    <location>
        <position position="358"/>
    </location>
</feature>
<feature type="modified residue" description="Phosphoserine" evidence="1">
    <location>
        <position position="715"/>
    </location>
</feature>
<feature type="cross-link" description="Glycyl lysine isopeptide (Lys-Gly) (interchain with G-Cter in SUMO2)" evidence="1">
    <location>
        <position position="313"/>
    </location>
</feature>
<feature type="sequence conflict" description="In Ref. 2; AAH26394." evidence="4" ref="2">
    <original>R</original>
    <variation>Q</variation>
    <location>
        <position position="373"/>
    </location>
</feature>
<organism>
    <name type="scientific">Mus musculus</name>
    <name type="common">Mouse</name>
    <dbReference type="NCBI Taxonomy" id="10090"/>
    <lineage>
        <taxon>Eukaryota</taxon>
        <taxon>Metazoa</taxon>
        <taxon>Chordata</taxon>
        <taxon>Craniata</taxon>
        <taxon>Vertebrata</taxon>
        <taxon>Euteleostomi</taxon>
        <taxon>Mammalia</taxon>
        <taxon>Eutheria</taxon>
        <taxon>Euarchontoglires</taxon>
        <taxon>Glires</taxon>
        <taxon>Rodentia</taxon>
        <taxon>Myomorpha</taxon>
        <taxon>Muroidea</taxon>
        <taxon>Muridae</taxon>
        <taxon>Murinae</taxon>
        <taxon>Mus</taxon>
        <taxon>Mus</taxon>
    </lineage>
</organism>
<name>GPTC1_MOUSE</name>
<proteinExistence type="evidence at transcript level"/>